<protein>
    <recommendedName>
        <fullName evidence="12">Phenoloxidase-activating factor 1</fullName>
        <ecNumber evidence="5 6 7 8 17">3.4.21.-</ecNumber>
    </recommendedName>
    <alternativeName>
        <fullName evidence="10">Prophenoloxidase-activating factor I</fullName>
    </alternativeName>
    <alternativeName>
        <fullName evidence="12">Serine protease PPAF-1</fullName>
    </alternativeName>
    <component>
        <recommendedName>
            <fullName evidence="12">Phenoloxidase-activating factor 1 light chain</fullName>
        </recommendedName>
    </component>
    <component>
        <recommendedName>
            <fullName evidence="12">Phenoloxidase-activating factor 1 heavy chain</fullName>
        </recommendedName>
    </component>
</protein>
<proteinExistence type="evidence at protein level"/>
<evidence type="ECO:0000255" key="1"/>
<evidence type="ECO:0000255" key="2">
    <source>
        <dbReference type="PROSITE-ProRule" id="PRU00274"/>
    </source>
</evidence>
<evidence type="ECO:0000255" key="3">
    <source>
        <dbReference type="PROSITE-ProRule" id="PRU01236"/>
    </source>
</evidence>
<evidence type="ECO:0000269" key="4">
    <source>
    </source>
</evidence>
<evidence type="ECO:0000269" key="5">
    <source>
    </source>
</evidence>
<evidence type="ECO:0000269" key="6">
    <source>
    </source>
</evidence>
<evidence type="ECO:0000269" key="7">
    <source>
    </source>
</evidence>
<evidence type="ECO:0000269" key="8">
    <source>
    </source>
</evidence>
<evidence type="ECO:0000269" key="9">
    <source>
    </source>
</evidence>
<evidence type="ECO:0000303" key="10">
    <source>
    </source>
</evidence>
<evidence type="ECO:0000303" key="11">
    <source>
    </source>
</evidence>
<evidence type="ECO:0000305" key="12"/>
<evidence type="ECO:0000305" key="13">
    <source>
    </source>
</evidence>
<evidence type="ECO:0000305" key="14">
    <source>
    </source>
</evidence>
<evidence type="ECO:0000305" key="15">
    <source>
    </source>
</evidence>
<evidence type="ECO:0000305" key="16">
    <source>
    </source>
</evidence>
<evidence type="ECO:0000305" key="17">
    <source>
    </source>
</evidence>
<evidence type="ECO:0000312" key="18">
    <source>
        <dbReference type="EMBL" id="BAA34642.1"/>
    </source>
</evidence>
<evidence type="ECO:0007744" key="19">
    <source>
        <dbReference type="PDB" id="2OLG"/>
    </source>
</evidence>
<evidence type="ECO:0007829" key="20">
    <source>
        <dbReference type="PDB" id="2OLG"/>
    </source>
</evidence>
<sequence>MKQVHFFILWFFVLNLYSIKAQAGCRTPNGENARCVPINNCKILYDSVLTSDPEVIRFLRASQCGYNGQPLVCCGSSASYQPPPTSASIRNRRPELLPNDCGYQVEADKILNGDDTVPEEFPWTAMIGYKNSSNFEQFACGGSLINNRYIVTAAHCVAGRVLRVVGALNKVRLGEWNTATDPDCYGAVRVCVPDKPIDLGIEETIQHPDYVDGSKDRYHDIALIRLNRQVEFTNYIRPVCLPQPNEEVQVGQRLTVVGWGRTETGQYSTIKQKLAVPVVHAEQCAKTFGAAGVRVRSSQLCAGGEKAKDSCGGDSGGPLLAERANQQFFLEGLVSFGATCGTEGWPGIYTKVGKYRDWIEGNIRP</sequence>
<name>PPAF1_HOLDI</name>
<organism evidence="18">
    <name type="scientific">Holotrichia diomphalia</name>
    <name type="common">Korean black chafer</name>
    <dbReference type="NCBI Taxonomy" id="33394"/>
    <lineage>
        <taxon>Eukaryota</taxon>
        <taxon>Metazoa</taxon>
        <taxon>Ecdysozoa</taxon>
        <taxon>Arthropoda</taxon>
        <taxon>Hexapoda</taxon>
        <taxon>Insecta</taxon>
        <taxon>Pterygota</taxon>
        <taxon>Neoptera</taxon>
        <taxon>Endopterygota</taxon>
        <taxon>Coleoptera</taxon>
        <taxon>Polyphaga</taxon>
        <taxon>Scarabaeiformia</taxon>
        <taxon>Scarabaeidae</taxon>
        <taxon>Melolonthinae</taxon>
        <taxon>Holotrichia</taxon>
    </lineage>
</organism>
<comment type="function">
    <text evidence="5 6 7 8 9">Serine endopeptidase which, by cleaving prophenoloxidase PPO1 and PPO2, is required for the activation of the prophenoloxidase cascade probably following the recognition of pathogen-derived products.</text>
</comment>
<comment type="activity regulation">
    <text evidence="4 5 7 8">Protein stability and endopeptidase activity are calcium dependent (PubMed:17287215). First cleavage on prophenoloxidase PPO1 and PPO2 is not dependent on calcium; however, cleavage of PPO1 and PPO2 to their active forms is dependent on calcium and on the presence of PPAF2 and PPAF3 (PubMed:12185078). Cleavage of PPAF2 is inhibited by calcium (PubMed:11012672, PubMed:12185078). Inhibited by ethylenediaminetetraacetic acid (EDTA), p-nitrophenyl-p'-guanido-benzoate, diisopropylphosphorofluoridate (iPr2PF) and p-(Amidinophenyl)methanesulfonyl fluoride (p-APMSF) (PubMed:17287215, PubMed:9652393).</text>
</comment>
<comment type="subunit">
    <text evidence="12">In the active form, heterodimer of a light chain and a heavy chain; disulfide-linked (Probable).</text>
</comment>
<comment type="subcellular location">
    <subcellularLocation>
        <location evidence="5 8 9">Secreted</location>
    </subcellularLocation>
    <text evidence="5 8 9">Secreted in the hemolymph.</text>
</comment>
<comment type="developmental stage">
    <text evidence="4">Expressed in larva (at protein level).</text>
</comment>
<comment type="domain">
    <text evidence="3 6">The clip domain consists of 35-55 residues which are 'knitted' together usually by 3 conserved disulfide bonds forming a clip-like compact structure (By similarity). The clip domain is necessary for regulating the zymogen activation (PubMed:16362048).</text>
</comment>
<comment type="PTM">
    <text evidence="4 6 7 8 9">Cleaved following the recognition of pathogen-derived products, probably by a lysyl endopeptidase.</text>
</comment>
<comment type="similarity">
    <text evidence="3">Belongs to the peptidase S1 family. CLIP subfamily.</text>
</comment>
<comment type="caution">
    <text evidence="12">It is not clear if the light chain is degraded after cleavage.</text>
</comment>
<keyword id="KW-0002">3D-structure</keyword>
<keyword id="KW-0106">Calcium</keyword>
<keyword id="KW-0903">Direct protein sequencing</keyword>
<keyword id="KW-1015">Disulfide bond</keyword>
<keyword id="KW-0325">Glycoprotein</keyword>
<keyword id="KW-0378">Hydrolase</keyword>
<keyword id="KW-0391">Immunity</keyword>
<keyword id="KW-0399">Innate immunity</keyword>
<keyword id="KW-0479">Metal-binding</keyword>
<keyword id="KW-0645">Protease</keyword>
<keyword id="KW-0964">Secreted</keyword>
<keyword id="KW-0720">Serine protease</keyword>
<keyword id="KW-0732">Signal</keyword>
<keyword id="KW-0865">Zymogen</keyword>
<accession>O97366</accession>
<gene>
    <name evidence="17" type="primary">PPAF1</name>
    <name evidence="11" type="synonym">PPAF-I</name>
</gene>
<feature type="signal peptide" evidence="1">
    <location>
        <begin position="1"/>
        <end position="23"/>
    </location>
</feature>
<feature type="chain" id="PRO_5004160790" description="Phenoloxidase-activating factor 1 light chain" evidence="13 14 15 16 17">
    <location>
        <begin position="24"/>
        <end position="109"/>
    </location>
</feature>
<feature type="chain" id="PRO_0000443316" description="Phenoloxidase-activating factor 1 heavy chain" evidence="13 14 15 16 17">
    <location>
        <begin position="110"/>
        <end position="365"/>
    </location>
</feature>
<feature type="domain" description="Clip" evidence="3">
    <location>
        <begin position="24"/>
        <end position="74"/>
    </location>
</feature>
<feature type="domain" description="Peptidase S1" evidence="2">
    <location>
        <begin position="110"/>
        <end position="364"/>
    </location>
</feature>
<feature type="active site" description="Charge relay system" evidence="2">
    <location>
        <position position="155"/>
    </location>
</feature>
<feature type="active site" description="Charge relay system" evidence="2">
    <location>
        <position position="220"/>
    </location>
</feature>
<feature type="active site" description="Charge relay system" evidence="2">
    <location>
        <position position="315"/>
    </location>
</feature>
<feature type="binding site" evidence="7 19">
    <location>
        <position position="175"/>
    </location>
    <ligand>
        <name>Ca(2+)</name>
        <dbReference type="ChEBI" id="CHEBI:29108"/>
    </ligand>
</feature>
<feature type="binding site" evidence="7 19">
    <location>
        <position position="177"/>
    </location>
    <ligand>
        <name>Ca(2+)</name>
        <dbReference type="ChEBI" id="CHEBI:29108"/>
    </ligand>
</feature>
<feature type="binding site" evidence="7 19">
    <location>
        <position position="180"/>
    </location>
    <ligand>
        <name>Ca(2+)</name>
        <dbReference type="ChEBI" id="CHEBI:29108"/>
    </ligand>
</feature>
<feature type="binding site" evidence="7 19">
    <location>
        <position position="183"/>
    </location>
    <ligand>
        <name>Ca(2+)</name>
        <dbReference type="ChEBI" id="CHEBI:29108"/>
    </ligand>
</feature>
<feature type="site" description="Cleavage" evidence="4 8 9">
    <location>
        <begin position="109"/>
        <end position="110"/>
    </location>
</feature>
<feature type="glycosylation site" description="N-linked (GlcNAc...) asparagine" evidence="7 19">
    <location>
        <position position="131"/>
    </location>
</feature>
<feature type="disulfide bond" evidence="3">
    <location>
        <begin position="25"/>
        <end position="73"/>
    </location>
</feature>
<feature type="disulfide bond" evidence="3">
    <location>
        <begin position="35"/>
        <end position="64"/>
    </location>
</feature>
<feature type="disulfide bond" evidence="3">
    <location>
        <begin position="41"/>
        <end position="74"/>
    </location>
</feature>
<feature type="disulfide bond" description="Interchain (between light and heavy chains)" evidence="7 19">
    <location>
        <begin position="101"/>
        <end position="240"/>
    </location>
</feature>
<feature type="disulfide bond" evidence="7 19">
    <location>
        <begin position="140"/>
        <end position="156"/>
    </location>
</feature>
<feature type="disulfide bond" evidence="7 19">
    <location>
        <begin position="184"/>
        <end position="191"/>
    </location>
</feature>
<feature type="disulfide bond" evidence="7 19">
    <location>
        <begin position="284"/>
        <end position="301"/>
    </location>
</feature>
<feature type="disulfide bond" evidence="7 19">
    <location>
        <begin position="311"/>
        <end position="340"/>
    </location>
</feature>
<feature type="helix" evidence="20">
    <location>
        <begin position="94"/>
        <end position="96"/>
    </location>
</feature>
<feature type="strand" evidence="20">
    <location>
        <begin position="113"/>
        <end position="115"/>
    </location>
</feature>
<feature type="strand" evidence="20">
    <location>
        <begin position="124"/>
        <end position="130"/>
    </location>
</feature>
<feature type="strand" evidence="20">
    <location>
        <begin position="136"/>
        <end position="144"/>
    </location>
</feature>
<feature type="strand" evidence="20">
    <location>
        <begin position="146"/>
        <end position="152"/>
    </location>
</feature>
<feature type="helix" evidence="20">
    <location>
        <begin position="154"/>
        <end position="156"/>
    </location>
</feature>
<feature type="helix" evidence="20">
    <location>
        <begin position="160"/>
        <end position="164"/>
    </location>
</feature>
<feature type="strand" evidence="20">
    <location>
        <begin position="167"/>
        <end position="174"/>
    </location>
</feature>
<feature type="turn" evidence="20">
    <location>
        <begin position="186"/>
        <end position="189"/>
    </location>
</feature>
<feature type="strand" evidence="20">
    <location>
        <begin position="197"/>
        <end position="199"/>
    </location>
</feature>
<feature type="strand" evidence="20">
    <location>
        <begin position="201"/>
        <end position="206"/>
    </location>
</feature>
<feature type="strand" evidence="20">
    <location>
        <begin position="222"/>
        <end position="228"/>
    </location>
</feature>
<feature type="strand" evidence="20">
    <location>
        <begin position="253"/>
        <end position="259"/>
    </location>
</feature>
<feature type="strand" evidence="20">
    <location>
        <begin position="262"/>
        <end position="264"/>
    </location>
</feature>
<feature type="strand" evidence="20">
    <location>
        <begin position="272"/>
        <end position="278"/>
    </location>
</feature>
<feature type="helix" evidence="20">
    <location>
        <begin position="281"/>
        <end position="288"/>
    </location>
</feature>
<feature type="strand" evidence="20">
    <location>
        <begin position="299"/>
        <end position="302"/>
    </location>
</feature>
<feature type="strand" evidence="20">
    <location>
        <begin position="318"/>
        <end position="323"/>
    </location>
</feature>
<feature type="helix" evidence="20">
    <location>
        <begin position="324"/>
        <end position="326"/>
    </location>
</feature>
<feature type="strand" evidence="20">
    <location>
        <begin position="327"/>
        <end position="336"/>
    </location>
</feature>
<feature type="strand" evidence="20">
    <location>
        <begin position="347"/>
        <end position="351"/>
    </location>
</feature>
<feature type="helix" evidence="20">
    <location>
        <begin position="352"/>
        <end position="355"/>
    </location>
</feature>
<feature type="helix" evidence="20">
    <location>
        <begin position="356"/>
        <end position="360"/>
    </location>
</feature>
<dbReference type="EC" id="3.4.21.-" evidence="5 6 7 8 17"/>
<dbReference type="EMBL" id="AB013088">
    <property type="protein sequence ID" value="BAA34642.1"/>
    <property type="molecule type" value="mRNA"/>
</dbReference>
<dbReference type="PDB" id="2OLG">
    <property type="method" value="X-ray"/>
    <property type="resolution" value="1.70 A"/>
    <property type="chains" value="A=88-365"/>
</dbReference>
<dbReference type="PDBsum" id="2OLG"/>
<dbReference type="SMR" id="O97366"/>
<dbReference type="MEROPS" id="S01.204"/>
<dbReference type="GlyCosmos" id="O97366">
    <property type="glycosylation" value="1 site, No reported glycans"/>
</dbReference>
<dbReference type="iPTMnet" id="O97366"/>
<dbReference type="EvolutionaryTrace" id="O97366"/>
<dbReference type="GO" id="GO:0005615">
    <property type="term" value="C:extracellular space"/>
    <property type="evidence" value="ECO:0000314"/>
    <property type="project" value="UniProtKB"/>
</dbReference>
<dbReference type="GO" id="GO:0005509">
    <property type="term" value="F:calcium ion binding"/>
    <property type="evidence" value="ECO:0000314"/>
    <property type="project" value="UniProtKB"/>
</dbReference>
<dbReference type="GO" id="GO:0004175">
    <property type="term" value="F:endopeptidase activity"/>
    <property type="evidence" value="ECO:0000314"/>
    <property type="project" value="UniProtKB"/>
</dbReference>
<dbReference type="GO" id="GO:0008233">
    <property type="term" value="F:peptidase activity"/>
    <property type="evidence" value="ECO:0000314"/>
    <property type="project" value="UniProtKB"/>
</dbReference>
<dbReference type="GO" id="GO:0004252">
    <property type="term" value="F:serine-type endopeptidase activity"/>
    <property type="evidence" value="ECO:0007669"/>
    <property type="project" value="InterPro"/>
</dbReference>
<dbReference type="GO" id="GO:0045087">
    <property type="term" value="P:innate immune response"/>
    <property type="evidence" value="ECO:0007669"/>
    <property type="project" value="UniProtKB-KW"/>
</dbReference>
<dbReference type="GO" id="GO:0006508">
    <property type="term" value="P:proteolysis"/>
    <property type="evidence" value="ECO:0000314"/>
    <property type="project" value="UniProtKB"/>
</dbReference>
<dbReference type="CDD" id="cd00190">
    <property type="entry name" value="Tryp_SPc"/>
    <property type="match status" value="1"/>
</dbReference>
<dbReference type="FunFam" id="2.40.10.10:FF:000028">
    <property type="entry name" value="Serine protease easter"/>
    <property type="match status" value="1"/>
</dbReference>
<dbReference type="FunFam" id="2.40.10.10:FF:000084">
    <property type="entry name" value="Serine protease easter"/>
    <property type="match status" value="1"/>
</dbReference>
<dbReference type="FunFam" id="3.30.1640.30:FF:000002">
    <property type="entry name" value="Spaetzle-processing enzyme"/>
    <property type="match status" value="1"/>
</dbReference>
<dbReference type="Gene3D" id="3.30.1640.30">
    <property type="match status" value="1"/>
</dbReference>
<dbReference type="Gene3D" id="2.40.10.10">
    <property type="entry name" value="Trypsin-like serine proteases"/>
    <property type="match status" value="2"/>
</dbReference>
<dbReference type="InterPro" id="IPR022700">
    <property type="entry name" value="CLIP"/>
</dbReference>
<dbReference type="InterPro" id="IPR038565">
    <property type="entry name" value="CLIP_sf"/>
</dbReference>
<dbReference type="InterPro" id="IPR009003">
    <property type="entry name" value="Peptidase_S1_PA"/>
</dbReference>
<dbReference type="InterPro" id="IPR043504">
    <property type="entry name" value="Peptidase_S1_PA_chymotrypsin"/>
</dbReference>
<dbReference type="InterPro" id="IPR001314">
    <property type="entry name" value="Peptidase_S1A"/>
</dbReference>
<dbReference type="InterPro" id="IPR001254">
    <property type="entry name" value="Trypsin_dom"/>
</dbReference>
<dbReference type="InterPro" id="IPR018114">
    <property type="entry name" value="TRYPSIN_HIS"/>
</dbReference>
<dbReference type="InterPro" id="IPR033116">
    <property type="entry name" value="TRYPSIN_SER"/>
</dbReference>
<dbReference type="PANTHER" id="PTHR24252">
    <property type="entry name" value="ACROSIN-RELATED"/>
    <property type="match status" value="1"/>
</dbReference>
<dbReference type="PANTHER" id="PTHR24252:SF7">
    <property type="entry name" value="HYALIN"/>
    <property type="match status" value="1"/>
</dbReference>
<dbReference type="Pfam" id="PF12032">
    <property type="entry name" value="CLIP"/>
    <property type="match status" value="1"/>
</dbReference>
<dbReference type="Pfam" id="PF00089">
    <property type="entry name" value="Trypsin"/>
    <property type="match status" value="1"/>
</dbReference>
<dbReference type="PRINTS" id="PR00722">
    <property type="entry name" value="CHYMOTRYPSIN"/>
</dbReference>
<dbReference type="SMART" id="SM00680">
    <property type="entry name" value="CLIP"/>
    <property type="match status" value="1"/>
</dbReference>
<dbReference type="SMART" id="SM00020">
    <property type="entry name" value="Tryp_SPc"/>
    <property type="match status" value="1"/>
</dbReference>
<dbReference type="SUPFAM" id="SSF50494">
    <property type="entry name" value="Trypsin-like serine proteases"/>
    <property type="match status" value="1"/>
</dbReference>
<dbReference type="PROSITE" id="PS51888">
    <property type="entry name" value="CLIP"/>
    <property type="match status" value="1"/>
</dbReference>
<dbReference type="PROSITE" id="PS50240">
    <property type="entry name" value="TRYPSIN_DOM"/>
    <property type="match status" value="1"/>
</dbReference>
<dbReference type="PROSITE" id="PS00134">
    <property type="entry name" value="TRYPSIN_HIS"/>
    <property type="match status" value="1"/>
</dbReference>
<dbReference type="PROSITE" id="PS00135">
    <property type="entry name" value="TRYPSIN_SER"/>
    <property type="match status" value="1"/>
</dbReference>
<reference evidence="18" key="1">
    <citation type="journal article" date="1998" name="Eur. J. Biochem.">
        <title>Molecular cloning of cDNA for pro-phenol-oxidase-activating factor I, a serine protease is induced by lipopolysaccharide or 1,3-beta-glucan in coleopteran insect, Holotrichia diomphalia larvae.</title>
        <authorList>
            <person name="Lee S.Y."/>
            <person name="Cho M.Y."/>
            <person name="Hyun J.H."/>
            <person name="Lee K.M."/>
            <person name="Homma K.I."/>
            <person name="Natori S."/>
            <person name="Kawabata S.I."/>
            <person name="Iwanaga S."/>
            <person name="Lee B.L."/>
        </authorList>
    </citation>
    <scope>NUCLEOTIDE SEQUENCE [MRNA]</scope>
    <scope>PROTEIN SEQUENCE OF 110-129; 171-190; 274-283 AND 287-300</scope>
    <scope>FUNCTION</scope>
    <scope>CATALYTIC ACTIVITY</scope>
    <scope>ACTIVITY REGULATION</scope>
    <scope>SUBCELLULAR LOCATION</scope>
    <scope>PROTEOLYTIC CLEAVAGE</scope>
</reference>
<reference evidence="12" key="2">
    <citation type="journal article" date="2005" name="EMBO J.">
        <title>Crystal structure of a clip-domain serine protease and functional roles of the clip domains.</title>
        <authorList>
            <person name="Piao S."/>
            <person name="Song Y.L."/>
            <person name="Kim J.H."/>
            <person name="Park S.Y."/>
            <person name="Park J.W."/>
            <person name="Lee B.L."/>
            <person name="Oh B.H."/>
            <person name="Ha N.C."/>
        </authorList>
    </citation>
    <scope>PROTEIN SEQUENCE OF 88-91</scope>
    <scope>FUNCTION</scope>
    <scope>CATALYTIC ACTIVITY</scope>
    <scope>PROTEOLYTIC CLEAVAGE</scope>
    <scope>DOMAIN</scope>
</reference>
<reference evidence="12" key="3">
    <citation type="journal article" date="1998" name="Eur. J. Biochem.">
        <title>In vitro activation of pro-phenol-oxidase by two kinds of pro-phenol-oxidase-activating factors isolated from hemolymph of coleopteran, Holotrichia diomphalia larvae.</title>
        <authorList>
            <person name="Lee S.Y."/>
            <person name="Kwon T.H."/>
            <person name="Hyun J.H."/>
            <person name="Choi J.S."/>
            <person name="Kawabata S.I."/>
            <person name="Iwanaga S."/>
            <person name="Lee B.L."/>
        </authorList>
    </citation>
    <scope>PROTEIN SEQUENCE OF 110-128</scope>
    <scope>FUNCTION</scope>
    <scope>CATALYTIC ACTIVITY</scope>
    <scope>ACTIVITY REGULATION</scope>
    <scope>SUBCELLULAR LOCATION</scope>
    <scope>PROTEOLYTIC CLEAVAGE</scope>
</reference>
<reference evidence="12" key="4">
    <citation type="journal article" date="2000" name="Eur. J. Biochem.">
        <title>A masquerade-like serine proteinase homologue is necessary for phenoloxidase activity in the coleopteran insect, Holotrichia diomphalia larvae.</title>
        <authorList>
            <person name="Kwon T.H."/>
            <person name="Kim M.S."/>
            <person name="Choi H.W."/>
            <person name="Joo C.H."/>
            <person name="Cho M.Y."/>
            <person name="Lee B.L."/>
        </authorList>
    </citation>
    <scope>PROTEIN SEQUENCE OF 110-117</scope>
    <scope>ACTIVITY REGULATION</scope>
    <scope>DEVELOPMENTAL STAGE</scope>
    <scope>PROTEOLYTIC CLEAVAGE</scope>
</reference>
<reference evidence="12" key="5">
    <citation type="journal article" date="2002" name="J. Biol. Chem.">
        <title>A new easter-type serine protease cleaves a masquerade-like protein during prophenoloxidase activation in Holotrichia diomphalia larvae.</title>
        <authorList>
            <person name="Kim M.S."/>
            <person name="Baek M.J."/>
            <person name="Lee M.H."/>
            <person name="Park J.W."/>
            <person name="Lee S.Y."/>
            <person name="Soderhall K."/>
            <person name="Lee B.L."/>
        </authorList>
    </citation>
    <scope>FUNCTION</scope>
    <scope>CATALYTIC ACTIVITY</scope>
    <scope>ACTIVITY REGULATION</scope>
    <scope>SUBCELLULAR LOCATION</scope>
</reference>
<reference evidence="19" key="6">
    <citation type="journal article" date="2007" name="J. Biol. Chem.">
        <title>Crystal structure of the serine protease domain of prophenoloxidase activating factor-I.</title>
        <authorList>
            <person name="Piao S."/>
            <person name="Kim S."/>
            <person name="Kim J.H."/>
            <person name="Park J.W."/>
            <person name="Lee B.L."/>
            <person name="Ha N.C."/>
        </authorList>
    </citation>
    <scope>X-RAY CRYSTALLOGRAPHY (1.70 ANGSTROMS) OF 88-365 IN COMPLEX WITH CALCIUM</scope>
    <scope>FUNCTION</scope>
    <scope>CATALYTIC ACTIVITY</scope>
    <scope>PROTEOLYTIC CLEAVAGE</scope>
    <scope>GLYCOSYLATION AT ASN-131</scope>
    <scope>DISULFIDE BONDS</scope>
</reference>